<name>RUVC_DESRM</name>
<keyword id="KW-0963">Cytoplasm</keyword>
<keyword id="KW-0227">DNA damage</keyword>
<keyword id="KW-0233">DNA recombination</keyword>
<keyword id="KW-0234">DNA repair</keyword>
<keyword id="KW-0238">DNA-binding</keyword>
<keyword id="KW-0255">Endonuclease</keyword>
<keyword id="KW-0378">Hydrolase</keyword>
<keyword id="KW-0460">Magnesium</keyword>
<keyword id="KW-0479">Metal-binding</keyword>
<keyword id="KW-0540">Nuclease</keyword>
<keyword id="KW-1185">Reference proteome</keyword>
<sequence>MIILGIDPGTAITGYGVIEFIGNRYKPITYSCLRTEPDLPLDLRLKKLYQGLMDIIKRYQPDCMAVEELFFNKNARTALAVGHARGIALLAGANSSIPVAEYTPLQVKQAVTGYGKAEKQQIQFMVKTLLSLPEIPKPDDVADALAVAICHAQWSSTFGGRIK</sequence>
<protein>
    <recommendedName>
        <fullName evidence="1">Crossover junction endodeoxyribonuclease RuvC</fullName>
        <ecNumber evidence="1">3.1.21.10</ecNumber>
    </recommendedName>
    <alternativeName>
        <fullName evidence="1">Holliday junction nuclease RuvC</fullName>
    </alternativeName>
    <alternativeName>
        <fullName evidence="1">Holliday junction resolvase RuvC</fullName>
    </alternativeName>
</protein>
<comment type="function">
    <text evidence="1">The RuvA-RuvB-RuvC complex processes Holliday junction (HJ) DNA during genetic recombination and DNA repair. Endonuclease that resolves HJ intermediates. Cleaves cruciform DNA by making single-stranded nicks across the HJ at symmetrical positions within the homologous arms, yielding a 5'-phosphate and a 3'-hydroxyl group; requires a central core of homology in the junction. The consensus cleavage sequence is 5'-(A/T)TT(C/G)-3'. Cleavage occurs on the 3'-side of the TT dinucleotide at the point of strand exchange. HJ branch migration catalyzed by RuvA-RuvB allows RuvC to scan DNA until it finds its consensus sequence, where it cleaves and resolves the cruciform DNA.</text>
</comment>
<comment type="catalytic activity">
    <reaction evidence="1">
        <text>Endonucleolytic cleavage at a junction such as a reciprocal single-stranded crossover between two homologous DNA duplexes (Holliday junction).</text>
        <dbReference type="EC" id="3.1.21.10"/>
    </reaction>
</comment>
<comment type="cofactor">
    <cofactor evidence="1">
        <name>Mg(2+)</name>
        <dbReference type="ChEBI" id="CHEBI:18420"/>
    </cofactor>
    <text evidence="1">Binds 2 Mg(2+) ion per subunit.</text>
</comment>
<comment type="subunit">
    <text evidence="1">Homodimer which binds Holliday junction (HJ) DNA. The HJ becomes 2-fold symmetrical on binding to RuvC with unstacked arms; it has a different conformation from HJ DNA in complex with RuvA. In the full resolvosome a probable DNA-RuvA(4)-RuvB(12)-RuvC(2) complex forms which resolves the HJ.</text>
</comment>
<comment type="subcellular location">
    <subcellularLocation>
        <location evidence="1">Cytoplasm</location>
    </subcellularLocation>
</comment>
<comment type="similarity">
    <text evidence="1">Belongs to the RuvC family.</text>
</comment>
<dbReference type="EC" id="3.1.21.10" evidence="1"/>
<dbReference type="EMBL" id="CP000612">
    <property type="protein sequence ID" value="ABO50188.1"/>
    <property type="molecule type" value="Genomic_DNA"/>
</dbReference>
<dbReference type="RefSeq" id="WP_011878003.1">
    <property type="nucleotide sequence ID" value="NC_009253.1"/>
</dbReference>
<dbReference type="SMR" id="A4J535"/>
<dbReference type="STRING" id="349161.Dred_1660"/>
<dbReference type="KEGG" id="drm:Dred_1660"/>
<dbReference type="eggNOG" id="COG0817">
    <property type="taxonomic scope" value="Bacteria"/>
</dbReference>
<dbReference type="HOGENOM" id="CLU_091257_3_1_9"/>
<dbReference type="OrthoDB" id="9805499at2"/>
<dbReference type="Proteomes" id="UP000001556">
    <property type="component" value="Chromosome"/>
</dbReference>
<dbReference type="GO" id="GO:0005737">
    <property type="term" value="C:cytoplasm"/>
    <property type="evidence" value="ECO:0007669"/>
    <property type="project" value="UniProtKB-SubCell"/>
</dbReference>
<dbReference type="GO" id="GO:0048476">
    <property type="term" value="C:Holliday junction resolvase complex"/>
    <property type="evidence" value="ECO:0007669"/>
    <property type="project" value="UniProtKB-UniRule"/>
</dbReference>
<dbReference type="GO" id="GO:0008821">
    <property type="term" value="F:crossover junction DNA endonuclease activity"/>
    <property type="evidence" value="ECO:0007669"/>
    <property type="project" value="UniProtKB-UniRule"/>
</dbReference>
<dbReference type="GO" id="GO:0003677">
    <property type="term" value="F:DNA binding"/>
    <property type="evidence" value="ECO:0007669"/>
    <property type="project" value="UniProtKB-KW"/>
</dbReference>
<dbReference type="GO" id="GO:0000287">
    <property type="term" value="F:magnesium ion binding"/>
    <property type="evidence" value="ECO:0007669"/>
    <property type="project" value="UniProtKB-UniRule"/>
</dbReference>
<dbReference type="GO" id="GO:0006310">
    <property type="term" value="P:DNA recombination"/>
    <property type="evidence" value="ECO:0007669"/>
    <property type="project" value="UniProtKB-UniRule"/>
</dbReference>
<dbReference type="GO" id="GO:0006281">
    <property type="term" value="P:DNA repair"/>
    <property type="evidence" value="ECO:0007669"/>
    <property type="project" value="UniProtKB-UniRule"/>
</dbReference>
<dbReference type="CDD" id="cd16962">
    <property type="entry name" value="RuvC"/>
    <property type="match status" value="1"/>
</dbReference>
<dbReference type="FunFam" id="3.30.420.10:FF:000002">
    <property type="entry name" value="Crossover junction endodeoxyribonuclease RuvC"/>
    <property type="match status" value="1"/>
</dbReference>
<dbReference type="Gene3D" id="3.30.420.10">
    <property type="entry name" value="Ribonuclease H-like superfamily/Ribonuclease H"/>
    <property type="match status" value="1"/>
</dbReference>
<dbReference type="HAMAP" id="MF_00034">
    <property type="entry name" value="RuvC"/>
    <property type="match status" value="1"/>
</dbReference>
<dbReference type="InterPro" id="IPR012337">
    <property type="entry name" value="RNaseH-like_sf"/>
</dbReference>
<dbReference type="InterPro" id="IPR036397">
    <property type="entry name" value="RNaseH_sf"/>
</dbReference>
<dbReference type="InterPro" id="IPR020563">
    <property type="entry name" value="X-over_junc_endoDNase_Mg_BS"/>
</dbReference>
<dbReference type="InterPro" id="IPR002176">
    <property type="entry name" value="X-over_junc_endoDNase_RuvC"/>
</dbReference>
<dbReference type="NCBIfam" id="NF000711">
    <property type="entry name" value="PRK00039.2-1"/>
    <property type="match status" value="1"/>
</dbReference>
<dbReference type="NCBIfam" id="TIGR00228">
    <property type="entry name" value="ruvC"/>
    <property type="match status" value="1"/>
</dbReference>
<dbReference type="PANTHER" id="PTHR30194">
    <property type="entry name" value="CROSSOVER JUNCTION ENDODEOXYRIBONUCLEASE RUVC"/>
    <property type="match status" value="1"/>
</dbReference>
<dbReference type="PANTHER" id="PTHR30194:SF3">
    <property type="entry name" value="CROSSOVER JUNCTION ENDODEOXYRIBONUCLEASE RUVC"/>
    <property type="match status" value="1"/>
</dbReference>
<dbReference type="Pfam" id="PF02075">
    <property type="entry name" value="RuvC"/>
    <property type="match status" value="1"/>
</dbReference>
<dbReference type="PRINTS" id="PR00696">
    <property type="entry name" value="RSOLVASERUVC"/>
</dbReference>
<dbReference type="SUPFAM" id="SSF53098">
    <property type="entry name" value="Ribonuclease H-like"/>
    <property type="match status" value="1"/>
</dbReference>
<dbReference type="PROSITE" id="PS01321">
    <property type="entry name" value="RUVC"/>
    <property type="match status" value="1"/>
</dbReference>
<evidence type="ECO:0000255" key="1">
    <source>
        <dbReference type="HAMAP-Rule" id="MF_00034"/>
    </source>
</evidence>
<feature type="chain" id="PRO_1000071031" description="Crossover junction endodeoxyribonuclease RuvC">
    <location>
        <begin position="1"/>
        <end position="163"/>
    </location>
</feature>
<feature type="active site" evidence="1">
    <location>
        <position position="7"/>
    </location>
</feature>
<feature type="active site" evidence="1">
    <location>
        <position position="67"/>
    </location>
</feature>
<feature type="active site" evidence="1">
    <location>
        <position position="140"/>
    </location>
</feature>
<feature type="binding site" evidence="1">
    <location>
        <position position="7"/>
    </location>
    <ligand>
        <name>Mg(2+)</name>
        <dbReference type="ChEBI" id="CHEBI:18420"/>
        <label>1</label>
    </ligand>
</feature>
<feature type="binding site" evidence="1">
    <location>
        <position position="67"/>
    </location>
    <ligand>
        <name>Mg(2+)</name>
        <dbReference type="ChEBI" id="CHEBI:18420"/>
        <label>2</label>
    </ligand>
</feature>
<feature type="binding site" evidence="1">
    <location>
        <position position="140"/>
    </location>
    <ligand>
        <name>Mg(2+)</name>
        <dbReference type="ChEBI" id="CHEBI:18420"/>
        <label>1</label>
    </ligand>
</feature>
<gene>
    <name evidence="1" type="primary">ruvC</name>
    <name type="ordered locus">Dred_1660</name>
</gene>
<reference key="1">
    <citation type="submission" date="2007-03" db="EMBL/GenBank/DDBJ databases">
        <title>Complete sequence of Desulfotomaculum reducens MI-1.</title>
        <authorList>
            <consortium name="US DOE Joint Genome Institute"/>
            <person name="Copeland A."/>
            <person name="Lucas S."/>
            <person name="Lapidus A."/>
            <person name="Barry K."/>
            <person name="Detter J.C."/>
            <person name="Glavina del Rio T."/>
            <person name="Hammon N."/>
            <person name="Israni S."/>
            <person name="Dalin E."/>
            <person name="Tice H."/>
            <person name="Pitluck S."/>
            <person name="Sims D."/>
            <person name="Brettin T."/>
            <person name="Bruce D."/>
            <person name="Han C."/>
            <person name="Tapia R."/>
            <person name="Schmutz J."/>
            <person name="Larimer F."/>
            <person name="Land M."/>
            <person name="Hauser L."/>
            <person name="Kyrpides N."/>
            <person name="Kim E."/>
            <person name="Tebo B.M."/>
            <person name="Richardson P."/>
        </authorList>
    </citation>
    <scope>NUCLEOTIDE SEQUENCE [LARGE SCALE GENOMIC DNA]</scope>
    <source>
        <strain>ATCC BAA-1160 / DSM 100696 / MI-1</strain>
    </source>
</reference>
<proteinExistence type="inferred from homology"/>
<accession>A4J535</accession>
<organism>
    <name type="scientific">Desulforamulus reducens (strain ATCC BAA-1160 / DSM 100696 / MI-1)</name>
    <name type="common">Desulfotomaculum reducens</name>
    <dbReference type="NCBI Taxonomy" id="349161"/>
    <lineage>
        <taxon>Bacteria</taxon>
        <taxon>Bacillati</taxon>
        <taxon>Bacillota</taxon>
        <taxon>Clostridia</taxon>
        <taxon>Eubacteriales</taxon>
        <taxon>Peptococcaceae</taxon>
        <taxon>Desulforamulus</taxon>
    </lineage>
</organism>